<dbReference type="EC" id="2.7.11.1"/>
<dbReference type="EMBL" id="AL030978">
    <property type="protein sequence ID" value="CAA19724.1"/>
    <property type="molecule type" value="Genomic_DNA"/>
</dbReference>
<dbReference type="EMBL" id="AL161566">
    <property type="protein sequence ID" value="CAB79585.1"/>
    <property type="molecule type" value="Genomic_DNA"/>
</dbReference>
<dbReference type="EMBL" id="CP002687">
    <property type="protein sequence ID" value="AEE85322.1"/>
    <property type="molecule type" value="Genomic_DNA"/>
</dbReference>
<dbReference type="PIR" id="T05754">
    <property type="entry name" value="T05754"/>
</dbReference>
<dbReference type="RefSeq" id="NP_194460.1">
    <property type="nucleotide sequence ID" value="NM_118864.2"/>
</dbReference>
<dbReference type="SMR" id="O81833"/>
<dbReference type="STRING" id="3702.O81833"/>
<dbReference type="GlyCosmos" id="O81833">
    <property type="glycosylation" value="5 sites, No reported glycans"/>
</dbReference>
<dbReference type="GlyGen" id="O81833">
    <property type="glycosylation" value="5 sites"/>
</dbReference>
<dbReference type="iPTMnet" id="O81833"/>
<dbReference type="PaxDb" id="3702-AT4G27300.1"/>
<dbReference type="ProteomicsDB" id="232777"/>
<dbReference type="EnsemblPlants" id="AT4G27300.1">
    <property type="protein sequence ID" value="AT4G27300.1"/>
    <property type="gene ID" value="AT4G27300"/>
</dbReference>
<dbReference type="GeneID" id="828838"/>
<dbReference type="Gramene" id="AT4G27300.1">
    <property type="protein sequence ID" value="AT4G27300.1"/>
    <property type="gene ID" value="AT4G27300"/>
</dbReference>
<dbReference type="KEGG" id="ath:AT4G27300"/>
<dbReference type="Araport" id="AT4G27300"/>
<dbReference type="TAIR" id="AT4G27300"/>
<dbReference type="eggNOG" id="ENOG502R6BG">
    <property type="taxonomic scope" value="Eukaryota"/>
</dbReference>
<dbReference type="HOGENOM" id="CLU_000288_116_5_1"/>
<dbReference type="InParanoid" id="O81833"/>
<dbReference type="OMA" id="YPMNTIL"/>
<dbReference type="PhylomeDB" id="O81833"/>
<dbReference type="PRO" id="PR:O81833"/>
<dbReference type="Proteomes" id="UP000006548">
    <property type="component" value="Chromosome 4"/>
</dbReference>
<dbReference type="ExpressionAtlas" id="O81833">
    <property type="expression patterns" value="baseline and differential"/>
</dbReference>
<dbReference type="GO" id="GO:0005886">
    <property type="term" value="C:plasma membrane"/>
    <property type="evidence" value="ECO:0007669"/>
    <property type="project" value="UniProtKB-SubCell"/>
</dbReference>
<dbReference type="GO" id="GO:0009506">
    <property type="term" value="C:plasmodesma"/>
    <property type="evidence" value="ECO:0007005"/>
    <property type="project" value="TAIR"/>
</dbReference>
<dbReference type="GO" id="GO:0005524">
    <property type="term" value="F:ATP binding"/>
    <property type="evidence" value="ECO:0007669"/>
    <property type="project" value="UniProtKB-KW"/>
</dbReference>
<dbReference type="GO" id="GO:0005516">
    <property type="term" value="F:calmodulin binding"/>
    <property type="evidence" value="ECO:0000250"/>
    <property type="project" value="UniProtKB"/>
</dbReference>
<dbReference type="GO" id="GO:0030246">
    <property type="term" value="F:carbohydrate binding"/>
    <property type="evidence" value="ECO:0007669"/>
    <property type="project" value="UniProtKB-KW"/>
</dbReference>
<dbReference type="GO" id="GO:0106310">
    <property type="term" value="F:protein serine kinase activity"/>
    <property type="evidence" value="ECO:0007669"/>
    <property type="project" value="RHEA"/>
</dbReference>
<dbReference type="GO" id="GO:0004674">
    <property type="term" value="F:protein serine/threonine kinase activity"/>
    <property type="evidence" value="ECO:0000250"/>
    <property type="project" value="UniProtKB"/>
</dbReference>
<dbReference type="GO" id="GO:0031625">
    <property type="term" value="F:ubiquitin protein ligase binding"/>
    <property type="evidence" value="ECO:0000353"/>
    <property type="project" value="UniProtKB"/>
</dbReference>
<dbReference type="GO" id="GO:0048544">
    <property type="term" value="P:recognition of pollen"/>
    <property type="evidence" value="ECO:0007669"/>
    <property type="project" value="InterPro"/>
</dbReference>
<dbReference type="CDD" id="cd00028">
    <property type="entry name" value="B_lectin"/>
    <property type="match status" value="1"/>
</dbReference>
<dbReference type="CDD" id="cd01098">
    <property type="entry name" value="PAN_AP_plant"/>
    <property type="match status" value="1"/>
</dbReference>
<dbReference type="CDD" id="cd14066">
    <property type="entry name" value="STKc_IRAK"/>
    <property type="match status" value="1"/>
</dbReference>
<dbReference type="FunFam" id="1.10.510.10:FF:000060">
    <property type="entry name" value="G-type lectin S-receptor-like serine/threonine-protein kinase"/>
    <property type="match status" value="1"/>
</dbReference>
<dbReference type="FunFam" id="3.50.4.10:FF:000002">
    <property type="entry name" value="G-type lectin S-receptor-like serine/threonine-protein kinase"/>
    <property type="match status" value="1"/>
</dbReference>
<dbReference type="FunFam" id="3.30.200.20:FF:000330">
    <property type="entry name" value="G-type lectin S-receptor-like serine/threonine-protein kinase At4g03230"/>
    <property type="match status" value="1"/>
</dbReference>
<dbReference type="FunFam" id="2.90.10.10:FF:000048">
    <property type="entry name" value="G-type lectin S-receptor-like serine/threonine-protein kinase SD1-1"/>
    <property type="match status" value="1"/>
</dbReference>
<dbReference type="Gene3D" id="2.90.10.10">
    <property type="entry name" value="Bulb-type lectin domain"/>
    <property type="match status" value="1"/>
</dbReference>
<dbReference type="Gene3D" id="3.50.4.10">
    <property type="entry name" value="Hepatocyte Growth Factor"/>
    <property type="match status" value="1"/>
</dbReference>
<dbReference type="Gene3D" id="3.30.200.20">
    <property type="entry name" value="Phosphorylase Kinase, domain 1"/>
    <property type="match status" value="1"/>
</dbReference>
<dbReference type="Gene3D" id="1.10.510.10">
    <property type="entry name" value="Transferase(Phosphotransferase) domain 1"/>
    <property type="match status" value="1"/>
</dbReference>
<dbReference type="InterPro" id="IPR001480">
    <property type="entry name" value="Bulb-type_lectin_dom"/>
</dbReference>
<dbReference type="InterPro" id="IPR036426">
    <property type="entry name" value="Bulb-type_lectin_dom_sf"/>
</dbReference>
<dbReference type="InterPro" id="IPR011009">
    <property type="entry name" value="Kinase-like_dom_sf"/>
</dbReference>
<dbReference type="InterPro" id="IPR003609">
    <property type="entry name" value="Pan_app"/>
</dbReference>
<dbReference type="InterPro" id="IPR000719">
    <property type="entry name" value="Prot_kinase_dom"/>
</dbReference>
<dbReference type="InterPro" id="IPR021820">
    <property type="entry name" value="S-locus_recpt_kinase_C"/>
</dbReference>
<dbReference type="InterPro" id="IPR000858">
    <property type="entry name" value="S_locus_glycoprot_dom"/>
</dbReference>
<dbReference type="InterPro" id="IPR001245">
    <property type="entry name" value="Ser-Thr/Tyr_kinase_cat_dom"/>
</dbReference>
<dbReference type="InterPro" id="IPR008271">
    <property type="entry name" value="Ser/Thr_kinase_AS"/>
</dbReference>
<dbReference type="InterPro" id="IPR024171">
    <property type="entry name" value="SRK-like_kinase"/>
</dbReference>
<dbReference type="PANTHER" id="PTHR27002:SF1079">
    <property type="entry name" value="G-TYPE LECTIN S-RECEPTOR-LIKE SERINE_THREONINE-PROTEIN KINASE SD1-1"/>
    <property type="match status" value="1"/>
</dbReference>
<dbReference type="PANTHER" id="PTHR27002">
    <property type="entry name" value="RECEPTOR-LIKE SERINE/THREONINE-PROTEIN KINASE SD1-8"/>
    <property type="match status" value="1"/>
</dbReference>
<dbReference type="Pfam" id="PF01453">
    <property type="entry name" value="B_lectin"/>
    <property type="match status" value="1"/>
</dbReference>
<dbReference type="Pfam" id="PF11883">
    <property type="entry name" value="DUF3403"/>
    <property type="match status" value="1"/>
</dbReference>
<dbReference type="Pfam" id="PF08276">
    <property type="entry name" value="PAN_2"/>
    <property type="match status" value="1"/>
</dbReference>
<dbReference type="Pfam" id="PF07714">
    <property type="entry name" value="PK_Tyr_Ser-Thr"/>
    <property type="match status" value="1"/>
</dbReference>
<dbReference type="Pfam" id="PF00954">
    <property type="entry name" value="S_locus_glycop"/>
    <property type="match status" value="1"/>
</dbReference>
<dbReference type="PIRSF" id="PIRSF000641">
    <property type="entry name" value="SRK"/>
    <property type="match status" value="1"/>
</dbReference>
<dbReference type="SMART" id="SM00108">
    <property type="entry name" value="B_lectin"/>
    <property type="match status" value="1"/>
</dbReference>
<dbReference type="SMART" id="SM00473">
    <property type="entry name" value="PAN_AP"/>
    <property type="match status" value="1"/>
</dbReference>
<dbReference type="SMART" id="SM00220">
    <property type="entry name" value="S_TKc"/>
    <property type="match status" value="1"/>
</dbReference>
<dbReference type="SUPFAM" id="SSF51110">
    <property type="entry name" value="alpha-D-mannose-specific plant lectins"/>
    <property type="match status" value="1"/>
</dbReference>
<dbReference type="SUPFAM" id="SSF56112">
    <property type="entry name" value="Protein kinase-like (PK-like)"/>
    <property type="match status" value="1"/>
</dbReference>
<dbReference type="PROSITE" id="PS50927">
    <property type="entry name" value="BULB_LECTIN"/>
    <property type="match status" value="1"/>
</dbReference>
<dbReference type="PROSITE" id="PS50948">
    <property type="entry name" value="PAN"/>
    <property type="match status" value="1"/>
</dbReference>
<dbReference type="PROSITE" id="PS50011">
    <property type="entry name" value="PROTEIN_KINASE_DOM"/>
    <property type="match status" value="1"/>
</dbReference>
<dbReference type="PROSITE" id="PS00108">
    <property type="entry name" value="PROTEIN_KINASE_ST"/>
    <property type="match status" value="1"/>
</dbReference>
<name>SD11_ARATH</name>
<accession>O81833</accession>
<organism>
    <name type="scientific">Arabidopsis thaliana</name>
    <name type="common">Mouse-ear cress</name>
    <dbReference type="NCBI Taxonomy" id="3702"/>
    <lineage>
        <taxon>Eukaryota</taxon>
        <taxon>Viridiplantae</taxon>
        <taxon>Streptophyta</taxon>
        <taxon>Embryophyta</taxon>
        <taxon>Tracheophyta</taxon>
        <taxon>Spermatophyta</taxon>
        <taxon>Magnoliopsida</taxon>
        <taxon>eudicotyledons</taxon>
        <taxon>Gunneridae</taxon>
        <taxon>Pentapetalae</taxon>
        <taxon>rosids</taxon>
        <taxon>malvids</taxon>
        <taxon>Brassicales</taxon>
        <taxon>Brassicaceae</taxon>
        <taxon>Camelineae</taxon>
        <taxon>Arabidopsis</taxon>
    </lineage>
</organism>
<keyword id="KW-0067">ATP-binding</keyword>
<keyword id="KW-1003">Cell membrane</keyword>
<keyword id="KW-1015">Disulfide bond</keyword>
<keyword id="KW-0245">EGF-like domain</keyword>
<keyword id="KW-0325">Glycoprotein</keyword>
<keyword id="KW-0418">Kinase</keyword>
<keyword id="KW-0430">Lectin</keyword>
<keyword id="KW-0472">Membrane</keyword>
<keyword id="KW-0547">Nucleotide-binding</keyword>
<keyword id="KW-0597">Phosphoprotein</keyword>
<keyword id="KW-0675">Receptor</keyword>
<keyword id="KW-1185">Reference proteome</keyword>
<keyword id="KW-0723">Serine/threonine-protein kinase</keyword>
<keyword id="KW-0732">Signal</keyword>
<keyword id="KW-0808">Transferase</keyword>
<keyword id="KW-0812">Transmembrane</keyword>
<keyword id="KW-1133">Transmembrane helix</keyword>
<gene>
    <name type="primary">SD11</name>
    <name type="ordered locus">At4g27300</name>
    <name type="ORF">M4I22.110</name>
</gene>
<feature type="signal peptide" evidence="3">
    <location>
        <begin position="1"/>
        <end position="22"/>
    </location>
</feature>
<feature type="chain" id="PRO_0000401300" description="G-type lectin S-receptor-like serine/threonine-protein kinase SD1-1">
    <location>
        <begin position="23"/>
        <end position="815"/>
    </location>
</feature>
<feature type="topological domain" description="Extracellular" evidence="3">
    <location>
        <begin position="23"/>
        <end position="438"/>
    </location>
</feature>
<feature type="transmembrane region" description="Helical" evidence="3">
    <location>
        <begin position="439"/>
        <end position="459"/>
    </location>
</feature>
<feature type="topological domain" description="Cytoplasmic" evidence="3">
    <location>
        <begin position="460"/>
        <end position="815"/>
    </location>
</feature>
<feature type="domain" description="Bulb-type lectin" evidence="4">
    <location>
        <begin position="25"/>
        <end position="152"/>
    </location>
</feature>
<feature type="domain" description="EGF-like">
    <location>
        <begin position="288"/>
        <end position="326"/>
    </location>
</feature>
<feature type="domain" description="PAN" evidence="6">
    <location>
        <begin position="345"/>
        <end position="428"/>
    </location>
</feature>
<feature type="domain" description="Protein kinase" evidence="5">
    <location>
        <begin position="500"/>
        <end position="783"/>
    </location>
</feature>
<feature type="region of interest" description="CaM-binding" evidence="1">
    <location>
        <begin position="589"/>
        <end position="606"/>
    </location>
</feature>
<feature type="active site" description="Proton acceptor" evidence="5 7">
    <location>
        <position position="625"/>
    </location>
</feature>
<feature type="binding site" evidence="5">
    <location>
        <begin position="506"/>
        <end position="514"/>
    </location>
    <ligand>
        <name>ATP</name>
        <dbReference type="ChEBI" id="CHEBI:30616"/>
    </ligand>
</feature>
<feature type="binding site" evidence="5">
    <location>
        <position position="528"/>
    </location>
    <ligand>
        <name>ATP</name>
        <dbReference type="ChEBI" id="CHEBI:30616"/>
    </ligand>
</feature>
<feature type="modified residue" description="Phosphoserine" evidence="2">
    <location>
        <position position="534"/>
    </location>
</feature>
<feature type="modified residue" description="Phosphoserine" evidence="2">
    <location>
        <position position="642"/>
    </location>
</feature>
<feature type="modified residue" description="Phosphothreonine" evidence="2">
    <location>
        <position position="659"/>
    </location>
</feature>
<feature type="modified residue" description="Phosphoserine" evidence="2">
    <location>
        <position position="797"/>
    </location>
</feature>
<feature type="modified residue" description="Phosphoserine" evidence="2">
    <location>
        <position position="803"/>
    </location>
</feature>
<feature type="modified residue" description="Phosphothreonine" evidence="2">
    <location>
        <position position="810"/>
    </location>
</feature>
<feature type="glycosylation site" description="N-linked (GlcNAc...) asparagine" evidence="3">
    <location>
        <position position="93"/>
    </location>
</feature>
<feature type="glycosylation site" description="N-linked (GlcNAc...) asparagine" evidence="3">
    <location>
        <position position="249"/>
    </location>
</feature>
<feature type="glycosylation site" description="N-linked (GlcNAc...) asparagine" evidence="3">
    <location>
        <position position="265"/>
    </location>
</feature>
<feature type="glycosylation site" description="N-linked (GlcNAc...) asparagine" evidence="3">
    <location>
        <position position="329"/>
    </location>
</feature>
<feature type="glycosylation site" description="N-linked (GlcNAc...) asparagine" evidence="3">
    <location>
        <position position="385"/>
    </location>
</feature>
<feature type="disulfide bond" evidence="1">
    <location>
        <begin position="292"/>
        <end position="304"/>
    </location>
</feature>
<feature type="disulfide bond" evidence="1">
    <location>
        <begin position="298"/>
        <end position="314"/>
    </location>
</feature>
<feature type="disulfide bond" evidence="1">
    <location>
        <begin position="378"/>
        <end position="403"/>
    </location>
</feature>
<feature type="disulfide bond" evidence="1">
    <location>
        <begin position="382"/>
        <end position="388"/>
    </location>
</feature>
<comment type="catalytic activity">
    <reaction>
        <text>L-seryl-[protein] + ATP = O-phospho-L-seryl-[protein] + ADP + H(+)</text>
        <dbReference type="Rhea" id="RHEA:17989"/>
        <dbReference type="Rhea" id="RHEA-COMP:9863"/>
        <dbReference type="Rhea" id="RHEA-COMP:11604"/>
        <dbReference type="ChEBI" id="CHEBI:15378"/>
        <dbReference type="ChEBI" id="CHEBI:29999"/>
        <dbReference type="ChEBI" id="CHEBI:30616"/>
        <dbReference type="ChEBI" id="CHEBI:83421"/>
        <dbReference type="ChEBI" id="CHEBI:456216"/>
        <dbReference type="EC" id="2.7.11.1"/>
    </reaction>
</comment>
<comment type="catalytic activity">
    <reaction>
        <text>L-threonyl-[protein] + ATP = O-phospho-L-threonyl-[protein] + ADP + H(+)</text>
        <dbReference type="Rhea" id="RHEA:46608"/>
        <dbReference type="Rhea" id="RHEA-COMP:11060"/>
        <dbReference type="Rhea" id="RHEA-COMP:11605"/>
        <dbReference type="ChEBI" id="CHEBI:15378"/>
        <dbReference type="ChEBI" id="CHEBI:30013"/>
        <dbReference type="ChEBI" id="CHEBI:30616"/>
        <dbReference type="ChEBI" id="CHEBI:61977"/>
        <dbReference type="ChEBI" id="CHEBI:456216"/>
        <dbReference type="EC" id="2.7.11.1"/>
    </reaction>
</comment>
<comment type="subunit">
    <text evidence="8">Interacts with PUB9, PUB13 and PUB14.</text>
</comment>
<comment type="subcellular location">
    <subcellularLocation>
        <location evidence="1">Cell membrane</location>
        <topology evidence="1">Single-pass type I membrane protein</topology>
    </subcellularLocation>
</comment>
<comment type="similarity">
    <text evidence="5">Belongs to the protein kinase superfamily. Ser/Thr protein kinase family.</text>
</comment>
<proteinExistence type="evidence at protein level"/>
<evidence type="ECO:0000250" key="1"/>
<evidence type="ECO:0000250" key="2">
    <source>
        <dbReference type="UniProtKB" id="Q9LPZ9"/>
    </source>
</evidence>
<evidence type="ECO:0000255" key="3"/>
<evidence type="ECO:0000255" key="4">
    <source>
        <dbReference type="PROSITE-ProRule" id="PRU00038"/>
    </source>
</evidence>
<evidence type="ECO:0000255" key="5">
    <source>
        <dbReference type="PROSITE-ProRule" id="PRU00159"/>
    </source>
</evidence>
<evidence type="ECO:0000255" key="6">
    <source>
        <dbReference type="PROSITE-ProRule" id="PRU00315"/>
    </source>
</evidence>
<evidence type="ECO:0000255" key="7">
    <source>
        <dbReference type="PROSITE-ProRule" id="PRU10027"/>
    </source>
</evidence>
<evidence type="ECO:0000269" key="8">
    <source>
    </source>
</evidence>
<protein>
    <recommendedName>
        <fullName>G-type lectin S-receptor-like serine/threonine-protein kinase SD1-1</fullName>
        <ecNumber>2.7.11.1</ecNumber>
    </recommendedName>
    <alternativeName>
        <fullName>S-domain-1 (SD1) receptor kinase 1</fullName>
        <shortName>SD1-1</shortName>
    </alternativeName>
</protein>
<sequence length="815" mass="91875">MREIHSLFSLSLFLISSSLSVALDYNVITPKEFLKDGDTLSSPDQVFQLGFFSLDQEEQPQHRFLGLWYMEPFAVVWVANRNNPLYGTSGFLNLSSLGDLQLFDGEHKALWSSSSSSTKASKTANNPLLKISCSGNLISSDGEEAVLWQSFDYPMNTILAGMKLGKNFKTQMEWSLSSWKTLKDPSPGDFTLSLDTRGLPQLILRKNGDSSYSYRLGSWNGLSFTGAPAMGRENSLFDYKFTSSAQEVNYSWTPRHRIVSRLVLNNTGKLHRFIQSKQNQWILANTAPEDECDYYSICGAYAVCGINSKNTPSCSCLQGFKPKSGRKWNISRGAYGCVHEIPTNCEKKDAFVKFPGLKLPDTSWSWYDAKNEMTLEDCKIKCSSNCSCTAYANTDIREGGKGCLLWFGDLVDMREYSSFGQDVYIRMGFAKIEFKGREVVGMVVGSVVAIAVVLVVVFACFRKKIMKRYRGENFRKGIEEEDLDLPIFDRKTISIATDDFSYVNFLGRGGFGPVYKGKLEDGQEIAVKRLSANSGQGVEEFKNEVKLIAKLQHRNLVRLLGCCIQGEECMLIYEYMPNKSLDFFIFDERRSTELDWKKRMNIINGVARGILYLHQDSRLRIIHRDLKAGNVLLDNDMNPKISDFGLAKSFGGDQSESSTNRVVGTYGYMPPEYAIDGHFSVKSDVFSFGVLVLEIITGKTNRGFRHADHDLNLLGHVWKMWVEDREIEVPEEEWLEETSVIPEVLRCIHVALLCVQQKPEDRPTMASVVLMFGSDSSLPHPTQPGFFTNRNVPDISSSLSLRSQNEVSITMLQGR</sequence>
<reference key="1">
    <citation type="journal article" date="1999" name="Nature">
        <title>Sequence and analysis of chromosome 4 of the plant Arabidopsis thaliana.</title>
        <authorList>
            <person name="Mayer K.F.X."/>
            <person name="Schueller C."/>
            <person name="Wambutt R."/>
            <person name="Murphy G."/>
            <person name="Volckaert G."/>
            <person name="Pohl T."/>
            <person name="Duesterhoeft A."/>
            <person name="Stiekema W."/>
            <person name="Entian K.-D."/>
            <person name="Terryn N."/>
            <person name="Harris B."/>
            <person name="Ansorge W."/>
            <person name="Brandt P."/>
            <person name="Grivell L.A."/>
            <person name="Rieger M."/>
            <person name="Weichselgartner M."/>
            <person name="de Simone V."/>
            <person name="Obermaier B."/>
            <person name="Mache R."/>
            <person name="Mueller M."/>
            <person name="Kreis M."/>
            <person name="Delseny M."/>
            <person name="Puigdomenech P."/>
            <person name="Watson M."/>
            <person name="Schmidtheini T."/>
            <person name="Reichert B."/>
            <person name="Portetelle D."/>
            <person name="Perez-Alonso M."/>
            <person name="Boutry M."/>
            <person name="Bancroft I."/>
            <person name="Vos P."/>
            <person name="Hoheisel J."/>
            <person name="Zimmermann W."/>
            <person name="Wedler H."/>
            <person name="Ridley P."/>
            <person name="Langham S.-A."/>
            <person name="McCullagh B."/>
            <person name="Bilham L."/>
            <person name="Robben J."/>
            <person name="van der Schueren J."/>
            <person name="Grymonprez B."/>
            <person name="Chuang Y.-J."/>
            <person name="Vandenbussche F."/>
            <person name="Braeken M."/>
            <person name="Weltjens I."/>
            <person name="Voet M."/>
            <person name="Bastiaens I."/>
            <person name="Aert R."/>
            <person name="Defoor E."/>
            <person name="Weitzenegger T."/>
            <person name="Bothe G."/>
            <person name="Ramsperger U."/>
            <person name="Hilbert H."/>
            <person name="Braun M."/>
            <person name="Holzer E."/>
            <person name="Brandt A."/>
            <person name="Peters S."/>
            <person name="van Staveren M."/>
            <person name="Dirkse W."/>
            <person name="Mooijman P."/>
            <person name="Klein Lankhorst R."/>
            <person name="Rose M."/>
            <person name="Hauf J."/>
            <person name="Koetter P."/>
            <person name="Berneiser S."/>
            <person name="Hempel S."/>
            <person name="Feldpausch M."/>
            <person name="Lamberth S."/>
            <person name="Van den Daele H."/>
            <person name="De Keyser A."/>
            <person name="Buysshaert C."/>
            <person name="Gielen J."/>
            <person name="Villarroel R."/>
            <person name="De Clercq R."/>
            <person name="van Montagu M."/>
            <person name="Rogers J."/>
            <person name="Cronin A."/>
            <person name="Quail M.A."/>
            <person name="Bray-Allen S."/>
            <person name="Clark L."/>
            <person name="Doggett J."/>
            <person name="Hall S."/>
            <person name="Kay M."/>
            <person name="Lennard N."/>
            <person name="McLay K."/>
            <person name="Mayes R."/>
            <person name="Pettett A."/>
            <person name="Rajandream M.A."/>
            <person name="Lyne M."/>
            <person name="Benes V."/>
            <person name="Rechmann S."/>
            <person name="Borkova D."/>
            <person name="Bloecker H."/>
            <person name="Scharfe M."/>
            <person name="Grimm M."/>
            <person name="Loehnert T.-H."/>
            <person name="Dose S."/>
            <person name="de Haan M."/>
            <person name="Maarse A.C."/>
            <person name="Schaefer M."/>
            <person name="Mueller-Auer S."/>
            <person name="Gabel C."/>
            <person name="Fuchs M."/>
            <person name="Fartmann B."/>
            <person name="Granderath K."/>
            <person name="Dauner D."/>
            <person name="Herzl A."/>
            <person name="Neumann S."/>
            <person name="Argiriou A."/>
            <person name="Vitale D."/>
            <person name="Liguori R."/>
            <person name="Piravandi E."/>
            <person name="Massenet O."/>
            <person name="Quigley F."/>
            <person name="Clabauld G."/>
            <person name="Muendlein A."/>
            <person name="Felber R."/>
            <person name="Schnabl S."/>
            <person name="Hiller R."/>
            <person name="Schmidt W."/>
            <person name="Lecharny A."/>
            <person name="Aubourg S."/>
            <person name="Chefdor F."/>
            <person name="Cooke R."/>
            <person name="Berger C."/>
            <person name="Monfort A."/>
            <person name="Casacuberta E."/>
            <person name="Gibbons T."/>
            <person name="Weber N."/>
            <person name="Vandenbol M."/>
            <person name="Bargues M."/>
            <person name="Terol J."/>
            <person name="Torres A."/>
            <person name="Perez-Perez A."/>
            <person name="Purnelle B."/>
            <person name="Bent E."/>
            <person name="Johnson S."/>
            <person name="Tacon D."/>
            <person name="Jesse T."/>
            <person name="Heijnen L."/>
            <person name="Schwarz S."/>
            <person name="Scholler P."/>
            <person name="Heber S."/>
            <person name="Francs P."/>
            <person name="Bielke C."/>
            <person name="Frishman D."/>
            <person name="Haase D."/>
            <person name="Lemcke K."/>
            <person name="Mewes H.-W."/>
            <person name="Stocker S."/>
            <person name="Zaccaria P."/>
            <person name="Bevan M."/>
            <person name="Wilson R.K."/>
            <person name="de la Bastide M."/>
            <person name="Habermann K."/>
            <person name="Parnell L."/>
            <person name="Dedhia N."/>
            <person name="Gnoj L."/>
            <person name="Schutz K."/>
            <person name="Huang E."/>
            <person name="Spiegel L."/>
            <person name="Sekhon M."/>
            <person name="Murray J."/>
            <person name="Sheet P."/>
            <person name="Cordes M."/>
            <person name="Abu-Threideh J."/>
            <person name="Stoneking T."/>
            <person name="Kalicki J."/>
            <person name="Graves T."/>
            <person name="Harmon G."/>
            <person name="Edwards J."/>
            <person name="Latreille P."/>
            <person name="Courtney L."/>
            <person name="Cloud J."/>
            <person name="Abbott A."/>
            <person name="Scott K."/>
            <person name="Johnson D."/>
            <person name="Minx P."/>
            <person name="Bentley D."/>
            <person name="Fulton B."/>
            <person name="Miller N."/>
            <person name="Greco T."/>
            <person name="Kemp K."/>
            <person name="Kramer J."/>
            <person name="Fulton L."/>
            <person name="Mardis E."/>
            <person name="Dante M."/>
            <person name="Pepin K."/>
            <person name="Hillier L.W."/>
            <person name="Nelson J."/>
            <person name="Spieth J."/>
            <person name="Ryan E."/>
            <person name="Andrews S."/>
            <person name="Geisel C."/>
            <person name="Layman D."/>
            <person name="Du H."/>
            <person name="Ali J."/>
            <person name="Berghoff A."/>
            <person name="Jones K."/>
            <person name="Drone K."/>
            <person name="Cotton M."/>
            <person name="Joshu C."/>
            <person name="Antonoiu B."/>
            <person name="Zidanic M."/>
            <person name="Strong C."/>
            <person name="Sun H."/>
            <person name="Lamar B."/>
            <person name="Yordan C."/>
            <person name="Ma P."/>
            <person name="Zhong J."/>
            <person name="Preston R."/>
            <person name="Vil D."/>
            <person name="Shekher M."/>
            <person name="Matero A."/>
            <person name="Shah R."/>
            <person name="Swaby I.K."/>
            <person name="O'Shaughnessy A."/>
            <person name="Rodriguez M."/>
            <person name="Hoffman J."/>
            <person name="Till S."/>
            <person name="Granat S."/>
            <person name="Shohdy N."/>
            <person name="Hasegawa A."/>
            <person name="Hameed A."/>
            <person name="Lodhi M."/>
            <person name="Johnson A."/>
            <person name="Chen E."/>
            <person name="Marra M.A."/>
            <person name="Martienssen R."/>
            <person name="McCombie W.R."/>
        </authorList>
    </citation>
    <scope>NUCLEOTIDE SEQUENCE [LARGE SCALE GENOMIC DNA]</scope>
    <source>
        <strain>cv. Columbia</strain>
    </source>
</reference>
<reference key="2">
    <citation type="journal article" date="2017" name="Plant J.">
        <title>Araport11: a complete reannotation of the Arabidopsis thaliana reference genome.</title>
        <authorList>
            <person name="Cheng C.Y."/>
            <person name="Krishnakumar V."/>
            <person name="Chan A.P."/>
            <person name="Thibaud-Nissen F."/>
            <person name="Schobel S."/>
            <person name="Town C.D."/>
        </authorList>
    </citation>
    <scope>GENOME REANNOTATION</scope>
    <source>
        <strain>cv. Columbia</strain>
    </source>
</reference>
<reference key="3">
    <citation type="journal article" date="2008" name="Plant Physiol.">
        <title>Interactions between the S-domain receptor kinases and AtPUB-ARM E3 ubiquitin ligases suggest a conserved signaling pathway in Arabidopsis.</title>
        <authorList>
            <person name="Samuel M.A."/>
            <person name="Mudgil Y."/>
            <person name="Salt J.N."/>
            <person name="Delmas F."/>
            <person name="Ramachandran S."/>
            <person name="Chilelli A."/>
            <person name="Goring D.R."/>
        </authorList>
    </citation>
    <scope>GENE FAMILY</scope>
    <scope>NOMENCLATURE</scope>
    <scope>INTERACTION WITH PUB9; PUB13 AND PUB14</scope>
</reference>